<proteinExistence type="inferred from homology"/>
<sequence length="254" mass="28271">MPNAQIPVLKKNRTKKRTSRKIAILLILLFIVLLAVLFFRSSLSRVSEIRFDGNVFSTRDQLLNRSGLAVGDQYFGVSSSDISEKLREIQSIQQVTVDKQFPGIIAIHIKEFATVAYELQSDGSLRAILANGTSVSVGSSGIAVEKPILTKWRSDDPYKAKLCDALSRIPGEWTADISEIIPAPIPSFPDRIKMYTRSQFEVITTVSLLNSKISYLNQVLETEDPGLITMLEADSYVPFKPDTSEEGQEKDTTQ</sequence>
<gene>
    <name evidence="1" type="primary">divIB</name>
    <name type="ordered locus">PPE_03124</name>
</gene>
<dbReference type="EMBL" id="CP000154">
    <property type="protein sequence ID" value="ADM70944.1"/>
    <property type="molecule type" value="Genomic_DNA"/>
</dbReference>
<dbReference type="RefSeq" id="WP_013311086.1">
    <property type="nucleotide sequence ID" value="NC_014483.2"/>
</dbReference>
<dbReference type="KEGG" id="ppy:PPE_03124"/>
<dbReference type="eggNOG" id="COG1589">
    <property type="taxonomic scope" value="Bacteria"/>
</dbReference>
<dbReference type="HOGENOM" id="CLU_046278_2_0_9"/>
<dbReference type="GO" id="GO:0032153">
    <property type="term" value="C:cell division site"/>
    <property type="evidence" value="ECO:0007669"/>
    <property type="project" value="UniProtKB-UniRule"/>
</dbReference>
<dbReference type="GO" id="GO:0005886">
    <property type="term" value="C:plasma membrane"/>
    <property type="evidence" value="ECO:0007669"/>
    <property type="project" value="UniProtKB-SubCell"/>
</dbReference>
<dbReference type="GO" id="GO:0043093">
    <property type="term" value="P:FtsZ-dependent cytokinesis"/>
    <property type="evidence" value="ECO:0007669"/>
    <property type="project" value="UniProtKB-UniRule"/>
</dbReference>
<dbReference type="Gene3D" id="3.40.50.10960">
    <property type="match status" value="1"/>
</dbReference>
<dbReference type="Gene3D" id="3.10.20.310">
    <property type="entry name" value="membrane protein fhac"/>
    <property type="match status" value="1"/>
</dbReference>
<dbReference type="HAMAP" id="MF_00912">
    <property type="entry name" value="DivIB"/>
    <property type="match status" value="1"/>
</dbReference>
<dbReference type="InterPro" id="IPR026580">
    <property type="entry name" value="DivIB"/>
</dbReference>
<dbReference type="InterPro" id="IPR050487">
    <property type="entry name" value="FtsQ_DivIB"/>
</dbReference>
<dbReference type="InterPro" id="IPR034746">
    <property type="entry name" value="POTRA"/>
</dbReference>
<dbReference type="InterPro" id="IPR013685">
    <property type="entry name" value="POTRA_FtsQ_type"/>
</dbReference>
<dbReference type="PANTHER" id="PTHR37820">
    <property type="entry name" value="CELL DIVISION PROTEIN DIVIB"/>
    <property type="match status" value="1"/>
</dbReference>
<dbReference type="PANTHER" id="PTHR37820:SF1">
    <property type="entry name" value="CELL DIVISION PROTEIN FTSQ"/>
    <property type="match status" value="1"/>
</dbReference>
<dbReference type="Pfam" id="PF08478">
    <property type="entry name" value="POTRA_1"/>
    <property type="match status" value="1"/>
</dbReference>
<dbReference type="PROSITE" id="PS51779">
    <property type="entry name" value="POTRA"/>
    <property type="match status" value="1"/>
</dbReference>
<accession>E0RGM4</accession>
<feature type="chain" id="PRO_0000414782" description="Cell division protein DivIB">
    <location>
        <begin position="1"/>
        <end position="254"/>
    </location>
</feature>
<feature type="topological domain" description="Cytoplasmic" evidence="1">
    <location>
        <begin position="1"/>
        <end position="21"/>
    </location>
</feature>
<feature type="transmembrane region" description="Helical" evidence="1">
    <location>
        <begin position="22"/>
        <end position="42"/>
    </location>
</feature>
<feature type="topological domain" description="Extracellular" evidence="1">
    <location>
        <begin position="43"/>
        <end position="254"/>
    </location>
</feature>
<feature type="domain" description="POTRA" evidence="2">
    <location>
        <begin position="44"/>
        <end position="112"/>
    </location>
</feature>
<name>DIVIB_PAEP6</name>
<keyword id="KW-0131">Cell cycle</keyword>
<keyword id="KW-0132">Cell division</keyword>
<keyword id="KW-1003">Cell membrane</keyword>
<keyword id="KW-0472">Membrane</keyword>
<keyword id="KW-0812">Transmembrane</keyword>
<keyword id="KW-1133">Transmembrane helix</keyword>
<evidence type="ECO:0000255" key="1">
    <source>
        <dbReference type="HAMAP-Rule" id="MF_00912"/>
    </source>
</evidence>
<evidence type="ECO:0000255" key="2">
    <source>
        <dbReference type="PROSITE-ProRule" id="PRU01115"/>
    </source>
</evidence>
<protein>
    <recommendedName>
        <fullName evidence="1">Cell division protein DivIB</fullName>
    </recommendedName>
</protein>
<organism>
    <name type="scientific">Paenibacillus polymyxa (strain E681)</name>
    <dbReference type="NCBI Taxonomy" id="349520"/>
    <lineage>
        <taxon>Bacteria</taxon>
        <taxon>Bacillati</taxon>
        <taxon>Bacillota</taxon>
        <taxon>Bacilli</taxon>
        <taxon>Bacillales</taxon>
        <taxon>Paenibacillaceae</taxon>
        <taxon>Paenibacillus</taxon>
    </lineage>
</organism>
<comment type="function">
    <text evidence="1">Cell division protein that may be involved in stabilizing or promoting the assembly of the division complex.</text>
</comment>
<comment type="subcellular location">
    <subcellularLocation>
        <location evidence="1">Cell membrane</location>
        <topology evidence="1">Single-pass type II membrane protein</topology>
    </subcellularLocation>
    <text evidence="1">Localizes to the division septum.</text>
</comment>
<comment type="similarity">
    <text evidence="1">Belongs to the FtsQ/DivIB family. DivIB subfamily.</text>
</comment>
<reference key="1">
    <citation type="journal article" date="2010" name="J. Bacteriol.">
        <title>Genome sequence of the polymyxin-producing plant-probiotic rhizobacterium Paenibacillus polymyxa E681.</title>
        <authorList>
            <person name="Kim J.F."/>
            <person name="Jeong H."/>
            <person name="Park S.Y."/>
            <person name="Kim S.B."/>
            <person name="Park Y.K."/>
            <person name="Choi S.K."/>
            <person name="Ryu C.M."/>
            <person name="Hur C.G."/>
            <person name="Ghim S.Y."/>
            <person name="Oh T.K."/>
            <person name="Kim J.J."/>
            <person name="Park C.S."/>
            <person name="Park S.H."/>
        </authorList>
    </citation>
    <scope>NUCLEOTIDE SEQUENCE [LARGE SCALE GENOMIC DNA]</scope>
    <source>
        <strain>E681</strain>
    </source>
</reference>